<comment type="function">
    <text evidence="2 5">Required for the use of extracellular DNA as a nutrient (PubMed:11591672). Could be the porin responsible for transport of DNA across the outer membrane (PubMed:16707682).</text>
</comment>
<comment type="subcellular location">
    <subcellularLocation>
        <location evidence="4">Cell outer membrane</location>
    </subcellularLocation>
</comment>
<comment type="disruption phenotype">
    <text evidence="2 3">Mutants show a stationary-phase competition defect during coculture with wild-type cells and an inability to utilize extracellular DNA as the sole source of carbon or energy. They have no defects in DNA uptake by electroporation or when made chemically competent (PubMed:11591672).</text>
</comment>
<comment type="similarity">
    <text evidence="4">Belongs to the bacterial secretin family. PilQ subfamily.</text>
</comment>
<name>HOFQ_ECOLI</name>
<reference key="1">
    <citation type="journal article" date="1992" name="J. Bacteriol.">
        <title>Identification of the gene (aroK) encoding shikimic acid kinase I of Escherichia coli.</title>
        <authorList>
            <person name="Lobner-Olesen A."/>
            <person name="Boye E."/>
            <person name="Marinus M.G."/>
        </authorList>
    </citation>
    <scope>PRELIMINARY NUCLEOTIDE SEQUENCE [GENOMIC DNA]</scope>
    <source>
        <strain>K12</strain>
    </source>
</reference>
<reference key="2">
    <citation type="journal article" date="1997" name="Science">
        <title>The complete genome sequence of Escherichia coli K-12.</title>
        <authorList>
            <person name="Blattner F.R."/>
            <person name="Plunkett G. III"/>
            <person name="Bloch C.A."/>
            <person name="Perna N.T."/>
            <person name="Burland V."/>
            <person name="Riley M."/>
            <person name="Collado-Vides J."/>
            <person name="Glasner J.D."/>
            <person name="Rode C.K."/>
            <person name="Mayhew G.F."/>
            <person name="Gregor J."/>
            <person name="Davis N.W."/>
            <person name="Kirkpatrick H.A."/>
            <person name="Goeden M.A."/>
            <person name="Rose D.J."/>
            <person name="Mau B."/>
            <person name="Shao Y."/>
        </authorList>
    </citation>
    <scope>NUCLEOTIDE SEQUENCE [LARGE SCALE GENOMIC DNA]</scope>
    <source>
        <strain>K12 / MG1655 / ATCC 47076</strain>
    </source>
</reference>
<reference key="3">
    <citation type="journal article" date="2006" name="Mol. Syst. Biol.">
        <title>Highly accurate genome sequences of Escherichia coli K-12 strains MG1655 and W3110.</title>
        <authorList>
            <person name="Hayashi K."/>
            <person name="Morooka N."/>
            <person name="Yamamoto Y."/>
            <person name="Fujita K."/>
            <person name="Isono K."/>
            <person name="Choi S."/>
            <person name="Ohtsubo E."/>
            <person name="Baba T."/>
            <person name="Wanner B.L."/>
            <person name="Mori H."/>
            <person name="Horiuchi T."/>
        </authorList>
    </citation>
    <scope>NUCLEOTIDE SEQUENCE [LARGE SCALE GENOMIC DNA]</scope>
    <source>
        <strain>K12 / W3110 / ATCC 27325 / DSM 5911</strain>
    </source>
</reference>
<reference key="4">
    <citation type="journal article" date="1993" name="Mol. Microbiol.">
        <title>Characterization of pilQ, a new gene required for the biogenesis of type 4 fimbriae in Pseudomonas aeruginosa.</title>
        <authorList>
            <person name="Martin P.R."/>
            <person name="Hobbs M."/>
            <person name="Free P.D."/>
            <person name="Jeske Y."/>
            <person name="Mattick J.S."/>
        </authorList>
    </citation>
    <scope>IDENTIFICATION</scope>
</reference>
<reference key="5">
    <citation type="journal article" date="2001" name="J. Bacteriol.">
        <title>DNA as a nutrient: novel role for bacterial competence gene homologs.</title>
        <authorList>
            <person name="Finkel S.E."/>
            <person name="Kolter R."/>
        </authorList>
    </citation>
    <scope>FUNCTION</scope>
    <scope>DISRUPTION PHENOTYPE</scope>
    <source>
        <strain>K12 / W3110 / ZK126</strain>
    </source>
</reference>
<reference key="6">
    <citation type="journal article" date="2006" name="J. Bacteriol.">
        <title>Escherichia coli competence gene homologs are essential for competitive fitness and the use of DNA as a nutrient.</title>
        <authorList>
            <person name="Palchevskiy V."/>
            <person name="Finkel S.E."/>
        </authorList>
    </citation>
    <scope>FUNCTION</scope>
    <scope>DISRUPTION PHENOTYPE</scope>
    <source>
        <strain>K12 / W3110 / ZK126</strain>
    </source>
</reference>
<proteinExistence type="inferred from homology"/>
<accession>P34749</accession>
<accession>Q2M756</accession>
<evidence type="ECO:0000255" key="1"/>
<evidence type="ECO:0000269" key="2">
    <source>
    </source>
</evidence>
<evidence type="ECO:0000269" key="3">
    <source>
    </source>
</evidence>
<evidence type="ECO:0000305" key="4"/>
<evidence type="ECO:0000305" key="5">
    <source>
    </source>
</evidence>
<organism>
    <name type="scientific">Escherichia coli (strain K12)</name>
    <dbReference type="NCBI Taxonomy" id="83333"/>
    <lineage>
        <taxon>Bacteria</taxon>
        <taxon>Pseudomonadati</taxon>
        <taxon>Pseudomonadota</taxon>
        <taxon>Gammaproteobacteria</taxon>
        <taxon>Enterobacterales</taxon>
        <taxon>Enterobacteriaceae</taxon>
        <taxon>Escherichia</taxon>
    </lineage>
</organism>
<protein>
    <recommendedName>
        <fullName>DNA utilization protein HofQ</fullName>
    </recommendedName>
</protein>
<dbReference type="EMBL" id="Z19601">
    <property type="status" value="NOT_ANNOTATED_CDS"/>
    <property type="molecule type" value="Genomic_DNA"/>
</dbReference>
<dbReference type="EMBL" id="U18997">
    <property type="protein sequence ID" value="AAA58188.1"/>
    <property type="molecule type" value="Genomic_DNA"/>
</dbReference>
<dbReference type="EMBL" id="U00096">
    <property type="protein sequence ID" value="AAC76416.1"/>
    <property type="molecule type" value="Genomic_DNA"/>
</dbReference>
<dbReference type="EMBL" id="AP009048">
    <property type="protein sequence ID" value="BAE77900.1"/>
    <property type="molecule type" value="Genomic_DNA"/>
</dbReference>
<dbReference type="PIR" id="B65134">
    <property type="entry name" value="B65134"/>
</dbReference>
<dbReference type="RefSeq" id="NP_417850.1">
    <property type="nucleotide sequence ID" value="NC_000913.3"/>
</dbReference>
<dbReference type="RefSeq" id="WP_000815987.1">
    <property type="nucleotide sequence ID" value="NZ_SSZK01000008.1"/>
</dbReference>
<dbReference type="SMR" id="P34749"/>
<dbReference type="BioGRID" id="4261394">
    <property type="interactions" value="25"/>
</dbReference>
<dbReference type="FunCoup" id="P34749">
    <property type="interactions" value="234"/>
</dbReference>
<dbReference type="IntAct" id="P34749">
    <property type="interactions" value="6"/>
</dbReference>
<dbReference type="STRING" id="511145.b3391"/>
<dbReference type="PaxDb" id="511145-b3391"/>
<dbReference type="EnsemblBacteria" id="AAC76416">
    <property type="protein sequence ID" value="AAC76416"/>
    <property type="gene ID" value="b3391"/>
</dbReference>
<dbReference type="GeneID" id="93778607"/>
<dbReference type="GeneID" id="947901"/>
<dbReference type="KEGG" id="ecj:JW3354"/>
<dbReference type="KEGG" id="eco:b3391"/>
<dbReference type="PATRIC" id="fig|511145.12.peg.3484"/>
<dbReference type="EchoBASE" id="EB2036"/>
<dbReference type="eggNOG" id="COG4796">
    <property type="taxonomic scope" value="Bacteria"/>
</dbReference>
<dbReference type="HOGENOM" id="CLU_006756_2_1_6"/>
<dbReference type="InParanoid" id="P34749"/>
<dbReference type="OMA" id="GSTTMEF"/>
<dbReference type="OrthoDB" id="9775455at2"/>
<dbReference type="PhylomeDB" id="P34749"/>
<dbReference type="BioCyc" id="EcoCyc:EG12113-MONOMER"/>
<dbReference type="PRO" id="PR:P34749"/>
<dbReference type="Proteomes" id="UP000000625">
    <property type="component" value="Chromosome"/>
</dbReference>
<dbReference type="GO" id="GO:0009279">
    <property type="term" value="C:cell outer membrane"/>
    <property type="evidence" value="ECO:0007669"/>
    <property type="project" value="UniProtKB-SubCell"/>
</dbReference>
<dbReference type="GO" id="GO:0003677">
    <property type="term" value="F:DNA binding"/>
    <property type="evidence" value="ECO:0000315"/>
    <property type="project" value="EcoliWiki"/>
</dbReference>
<dbReference type="GO" id="GO:0015976">
    <property type="term" value="P:carbon utilization"/>
    <property type="evidence" value="ECO:0000315"/>
    <property type="project" value="EcoCyc"/>
</dbReference>
<dbReference type="GO" id="GO:0006308">
    <property type="term" value="P:DNA catabolic process"/>
    <property type="evidence" value="ECO:0000315"/>
    <property type="project" value="EcoCyc"/>
</dbReference>
<dbReference type="GO" id="GO:0009306">
    <property type="term" value="P:protein secretion"/>
    <property type="evidence" value="ECO:0007669"/>
    <property type="project" value="InterPro"/>
</dbReference>
<dbReference type="FunFam" id="3.30.1370.120:FF:000004">
    <property type="entry name" value="DNA transporter HofQ"/>
    <property type="match status" value="1"/>
</dbReference>
<dbReference type="Gene3D" id="3.30.1370.120">
    <property type="match status" value="1"/>
</dbReference>
<dbReference type="Gene3D" id="3.30.1370.130">
    <property type="match status" value="1"/>
</dbReference>
<dbReference type="InterPro" id="IPR001775">
    <property type="entry name" value="GspD/PilQ"/>
</dbReference>
<dbReference type="InterPro" id="IPR005644">
    <property type="entry name" value="NolW-like"/>
</dbReference>
<dbReference type="InterPro" id="IPR038591">
    <property type="entry name" value="NolW-like_sf"/>
</dbReference>
<dbReference type="InterPro" id="IPR013355">
    <property type="entry name" value="Pilus_4_PilQ"/>
</dbReference>
<dbReference type="InterPro" id="IPR011662">
    <property type="entry name" value="Secretin/TonB_short_N"/>
</dbReference>
<dbReference type="InterPro" id="IPR004846">
    <property type="entry name" value="T2SS/T3SS_dom"/>
</dbReference>
<dbReference type="InterPro" id="IPR004845">
    <property type="entry name" value="T2SS_GspD_CS"/>
</dbReference>
<dbReference type="InterPro" id="IPR051808">
    <property type="entry name" value="Type_IV_pilus_biogenesis"/>
</dbReference>
<dbReference type="NCBIfam" id="TIGR02515">
    <property type="entry name" value="IV_pilus_PilQ"/>
    <property type="match status" value="1"/>
</dbReference>
<dbReference type="NCBIfam" id="NF007851">
    <property type="entry name" value="PRK10560.1"/>
    <property type="match status" value="1"/>
</dbReference>
<dbReference type="PANTHER" id="PTHR30604:SF1">
    <property type="entry name" value="DNA UTILIZATION PROTEIN HOFQ"/>
    <property type="match status" value="1"/>
</dbReference>
<dbReference type="PANTHER" id="PTHR30604">
    <property type="entry name" value="PROTEIN TRANSPORT PROTEIN HOFQ"/>
    <property type="match status" value="1"/>
</dbReference>
<dbReference type="Pfam" id="PF00263">
    <property type="entry name" value="Secretin"/>
    <property type="match status" value="1"/>
</dbReference>
<dbReference type="Pfam" id="PF03958">
    <property type="entry name" value="Secretin_N"/>
    <property type="match status" value="1"/>
</dbReference>
<dbReference type="PRINTS" id="PR00811">
    <property type="entry name" value="BCTERIALGSPD"/>
</dbReference>
<dbReference type="PRINTS" id="PR01032">
    <property type="entry name" value="PHAGEIV"/>
</dbReference>
<dbReference type="SMART" id="SM00965">
    <property type="entry name" value="STN"/>
    <property type="match status" value="1"/>
</dbReference>
<dbReference type="PROSITE" id="PS00875">
    <property type="entry name" value="T2SP_D"/>
    <property type="match status" value="1"/>
</dbReference>
<gene>
    <name type="primary">hofQ</name>
    <name type="synonym">hopQ</name>
    <name type="ordered locus">b3391</name>
    <name type="ordered locus">JW3354</name>
</gene>
<keyword id="KW-0998">Cell outer membrane</keyword>
<keyword id="KW-0472">Membrane</keyword>
<keyword id="KW-1185">Reference proteome</keyword>
<keyword id="KW-0732">Signal</keyword>
<keyword id="KW-0813">Transport</keyword>
<sequence length="412" mass="44716">MKQWIAALLLMLIPGVQAAKPQKVTLMVDDVPVAQVLQALAEQEKLNLVVSPDVSGTVSLHLTDVPWKQALQTVVKSAGLITRQEGNILSVHSIAWQNNNIARQEAEQARAQANLPLENRSITLQYADAGELAKAGEKLLSAKGSMTVDKRTNRLLLRDNKTALSALEQWVAQMDLPVGQVELSAHIVTINEKSLRELGVKWTLADAQHAGGVGQVTTLGSDLSVATATTHVGFNIGRINGRLLDLELSALEQKQQLDIIASPRLLASHLQPASIKQGSEIPYQVSSGESGATSVEFKEAVLGMEVTPTVLQKGRIRLKLHISQNVPGQVLQQADGEVLAIDKQEIETQVEVKSGETLALGGIFTRKNKSGQDSVPLLGDIPWFGQLFRHDGKEDERRELVVFITPRLVSSE</sequence>
<feature type="signal peptide" evidence="1">
    <location>
        <begin position="1"/>
        <end position="18"/>
    </location>
</feature>
<feature type="chain" id="PRO_0000013107" description="DNA utilization protein HofQ">
    <location>
        <begin position="19"/>
        <end position="412"/>
    </location>
</feature>